<reference key="1">
    <citation type="journal article" date="2008" name="PLoS ONE">
        <title>Environmental adaptation: genomic analysis of the piezotolerant and psychrotolerant deep-sea iron reducing bacterium Shewanella piezotolerans WP3.</title>
        <authorList>
            <person name="Wang F."/>
            <person name="Wang J."/>
            <person name="Jian H."/>
            <person name="Zhang B."/>
            <person name="Li S."/>
            <person name="Wang F."/>
            <person name="Zeng X."/>
            <person name="Gao L."/>
            <person name="Bartlett D.H."/>
            <person name="Yu J."/>
            <person name="Hu S."/>
            <person name="Xiao X."/>
        </authorList>
    </citation>
    <scope>NUCLEOTIDE SEQUENCE [LARGE SCALE GENOMIC DNA]</scope>
    <source>
        <strain>WP3 / JCM 13877</strain>
    </source>
</reference>
<keyword id="KW-0997">Cell inner membrane</keyword>
<keyword id="KW-1003">Cell membrane</keyword>
<keyword id="KW-0249">Electron transport</keyword>
<keyword id="KW-0472">Membrane</keyword>
<keyword id="KW-1278">Translocase</keyword>
<keyword id="KW-0812">Transmembrane</keyword>
<keyword id="KW-1133">Transmembrane helix</keyword>
<keyword id="KW-0813">Transport</keyword>
<proteinExistence type="inferred from homology"/>
<protein>
    <recommendedName>
        <fullName evidence="1">Ion-translocating oxidoreductase complex subunit E</fullName>
        <ecNumber evidence="1">7.-.-.-</ecNumber>
    </recommendedName>
    <alternativeName>
        <fullName evidence="1">Rnf electron transport complex subunit E</fullName>
    </alternativeName>
</protein>
<gene>
    <name evidence="1" type="primary">rnfE</name>
    <name type="ordered locus">swp_2365</name>
</gene>
<organism>
    <name type="scientific">Shewanella piezotolerans (strain WP3 / JCM 13877)</name>
    <dbReference type="NCBI Taxonomy" id="225849"/>
    <lineage>
        <taxon>Bacteria</taxon>
        <taxon>Pseudomonadati</taxon>
        <taxon>Pseudomonadota</taxon>
        <taxon>Gammaproteobacteria</taxon>
        <taxon>Alteromonadales</taxon>
        <taxon>Shewanellaceae</taxon>
        <taxon>Shewanella</taxon>
    </lineage>
</organism>
<evidence type="ECO:0000255" key="1">
    <source>
        <dbReference type="HAMAP-Rule" id="MF_00478"/>
    </source>
</evidence>
<comment type="function">
    <text evidence="1">Part of a membrane-bound complex that couples electron transfer with translocation of ions across the membrane.</text>
</comment>
<comment type="subunit">
    <text evidence="1">The complex is composed of six subunits: RnfA, RnfB, RnfC, RnfD, RnfE and RnfG.</text>
</comment>
<comment type="subcellular location">
    <subcellularLocation>
        <location evidence="1">Cell inner membrane</location>
        <topology evidence="1">Multi-pass membrane protein</topology>
    </subcellularLocation>
</comment>
<comment type="similarity">
    <text evidence="1">Belongs to the NqrDE/RnfAE family.</text>
</comment>
<feature type="chain" id="PRO_1000125866" description="Ion-translocating oxidoreductase complex subunit E">
    <location>
        <begin position="1"/>
        <end position="231"/>
    </location>
</feature>
<feature type="transmembrane region" description="Helical" evidence="1">
    <location>
        <begin position="18"/>
        <end position="38"/>
    </location>
</feature>
<feature type="transmembrane region" description="Helical" evidence="1">
    <location>
        <begin position="39"/>
        <end position="59"/>
    </location>
</feature>
<feature type="transmembrane region" description="Helical" evidence="1">
    <location>
        <begin position="69"/>
        <end position="89"/>
    </location>
</feature>
<feature type="transmembrane region" description="Helical" evidence="1">
    <location>
        <begin position="93"/>
        <end position="113"/>
    </location>
</feature>
<feature type="transmembrane region" description="Helical" evidence="1">
    <location>
        <begin position="127"/>
        <end position="147"/>
    </location>
</feature>
<feature type="transmembrane region" description="Helical" evidence="1">
    <location>
        <begin position="182"/>
        <end position="202"/>
    </location>
</feature>
<sequence length="231" mass="25043">MSDYKELAWQGLWKNNPGLVQLLGLCPLLAVTATLTNALGLGLATMLVLIGSNILVSLVRDYVPKEIRIPVFVMIIAALVTSVQLFINAYAYGLYLSLGIFLPLIVTNCVIIGRAEAFASRNSVVKSTFDGLMMGLGFTLVLCVLGASREILGQGTLFYGADQLLGEWAKGLTIQIWQVDTTFLLAMLPPGAFIGMGLLIALKNVIDNYIEARQPKVELEAPARVRITKVN</sequence>
<name>RNFE_SHEPW</name>
<accession>B8CM53</accession>
<dbReference type="EC" id="7.-.-.-" evidence="1"/>
<dbReference type="EMBL" id="CP000472">
    <property type="protein sequence ID" value="ACJ29110.1"/>
    <property type="molecule type" value="Genomic_DNA"/>
</dbReference>
<dbReference type="RefSeq" id="WP_020912470.1">
    <property type="nucleotide sequence ID" value="NC_011566.1"/>
</dbReference>
<dbReference type="SMR" id="B8CM53"/>
<dbReference type="STRING" id="225849.swp_2365"/>
<dbReference type="KEGG" id="swp:swp_2365"/>
<dbReference type="eggNOG" id="COG4660">
    <property type="taxonomic scope" value="Bacteria"/>
</dbReference>
<dbReference type="HOGENOM" id="CLU_046659_1_0_6"/>
<dbReference type="OrthoDB" id="9782945at2"/>
<dbReference type="Proteomes" id="UP000000753">
    <property type="component" value="Chromosome"/>
</dbReference>
<dbReference type="GO" id="GO:0005886">
    <property type="term" value="C:plasma membrane"/>
    <property type="evidence" value="ECO:0007669"/>
    <property type="project" value="UniProtKB-SubCell"/>
</dbReference>
<dbReference type="GO" id="GO:0022900">
    <property type="term" value="P:electron transport chain"/>
    <property type="evidence" value="ECO:0007669"/>
    <property type="project" value="UniProtKB-UniRule"/>
</dbReference>
<dbReference type="HAMAP" id="MF_00478">
    <property type="entry name" value="RsxE_RnfE"/>
    <property type="match status" value="1"/>
</dbReference>
<dbReference type="InterPro" id="IPR003667">
    <property type="entry name" value="NqrDE/RnfAE"/>
</dbReference>
<dbReference type="InterPro" id="IPR010968">
    <property type="entry name" value="RnfE"/>
</dbReference>
<dbReference type="NCBIfam" id="NF009070">
    <property type="entry name" value="PRK12405.1"/>
    <property type="match status" value="1"/>
</dbReference>
<dbReference type="NCBIfam" id="TIGR01948">
    <property type="entry name" value="rnfE"/>
    <property type="match status" value="1"/>
</dbReference>
<dbReference type="PANTHER" id="PTHR30586">
    <property type="entry name" value="ELECTRON TRANSPORT COMPLEX PROTEIN RNFE"/>
    <property type="match status" value="1"/>
</dbReference>
<dbReference type="PANTHER" id="PTHR30586:SF0">
    <property type="entry name" value="ION-TRANSLOCATING OXIDOREDUCTASE COMPLEX SUBUNIT E"/>
    <property type="match status" value="1"/>
</dbReference>
<dbReference type="Pfam" id="PF02508">
    <property type="entry name" value="Rnf-Nqr"/>
    <property type="match status" value="1"/>
</dbReference>
<dbReference type="PIRSF" id="PIRSF006102">
    <property type="entry name" value="NQR_DE"/>
    <property type="match status" value="1"/>
</dbReference>